<gene>
    <name type="primary">Ippk</name>
</gene>
<evidence type="ECO:0000250" key="1"/>
<evidence type="ECO:0000269" key="2">
    <source>
    </source>
</evidence>
<evidence type="ECO:0000305" key="3"/>
<evidence type="ECO:0007829" key="4">
    <source>
        <dbReference type="PDB" id="5MW8"/>
    </source>
</evidence>
<evidence type="ECO:0007829" key="5">
    <source>
        <dbReference type="PDB" id="5MWL"/>
    </source>
</evidence>
<organism>
    <name type="scientific">Mus musculus</name>
    <name type="common">Mouse</name>
    <dbReference type="NCBI Taxonomy" id="10090"/>
    <lineage>
        <taxon>Eukaryota</taxon>
        <taxon>Metazoa</taxon>
        <taxon>Chordata</taxon>
        <taxon>Craniata</taxon>
        <taxon>Vertebrata</taxon>
        <taxon>Euteleostomi</taxon>
        <taxon>Mammalia</taxon>
        <taxon>Eutheria</taxon>
        <taxon>Euarchontoglires</taxon>
        <taxon>Glires</taxon>
        <taxon>Rodentia</taxon>
        <taxon>Myomorpha</taxon>
        <taxon>Muroidea</taxon>
        <taxon>Muridae</taxon>
        <taxon>Murinae</taxon>
        <taxon>Mus</taxon>
        <taxon>Mus</taxon>
    </lineage>
</organism>
<keyword id="KW-0002">3D-structure</keyword>
<keyword id="KW-0067">ATP-binding</keyword>
<keyword id="KW-0963">Cytoplasm</keyword>
<keyword id="KW-0418">Kinase</keyword>
<keyword id="KW-0547">Nucleotide-binding</keyword>
<keyword id="KW-0539">Nucleus</keyword>
<keyword id="KW-1185">Reference proteome</keyword>
<keyword id="KW-0808">Transferase</keyword>
<dbReference type="EC" id="2.7.1.158"/>
<dbReference type="EMBL" id="AK029085">
    <property type="protein sequence ID" value="BAE20447.1"/>
    <property type="molecule type" value="mRNA"/>
</dbReference>
<dbReference type="EMBL" id="AK160092">
    <property type="protein sequence ID" value="BAE35623.1"/>
    <property type="molecule type" value="mRNA"/>
</dbReference>
<dbReference type="EMBL" id="AK167467">
    <property type="protein sequence ID" value="BAE39551.1"/>
    <property type="molecule type" value="mRNA"/>
</dbReference>
<dbReference type="EMBL" id="BC062167">
    <property type="protein sequence ID" value="AAH62167.1"/>
    <property type="molecule type" value="mRNA"/>
</dbReference>
<dbReference type="EMBL" id="BC065157">
    <property type="protein sequence ID" value="AAH65157.1"/>
    <property type="molecule type" value="mRNA"/>
</dbReference>
<dbReference type="CCDS" id="CCDS26500.1"/>
<dbReference type="RefSeq" id="NP_951011.1">
    <property type="nucleotide sequence ID" value="NM_199056.4"/>
</dbReference>
<dbReference type="PDB" id="5MW8">
    <property type="method" value="X-ray"/>
    <property type="resolution" value="2.40 A"/>
    <property type="chains" value="A=1-468"/>
</dbReference>
<dbReference type="PDB" id="5MWL">
    <property type="method" value="X-ray"/>
    <property type="resolution" value="3.20 A"/>
    <property type="chains" value="A/B=1-468"/>
</dbReference>
<dbReference type="PDB" id="5MWM">
    <property type="method" value="X-ray"/>
    <property type="resolution" value="2.60 A"/>
    <property type="chains" value="A=1-468"/>
</dbReference>
<dbReference type="PDBsum" id="5MW8"/>
<dbReference type="PDBsum" id="5MWL"/>
<dbReference type="PDBsum" id="5MWM"/>
<dbReference type="SMR" id="Q6P1C1"/>
<dbReference type="BioGRID" id="217663">
    <property type="interactions" value="6"/>
</dbReference>
<dbReference type="FunCoup" id="Q6P1C1">
    <property type="interactions" value="2961"/>
</dbReference>
<dbReference type="STRING" id="10090.ENSMUSP00000152331"/>
<dbReference type="iPTMnet" id="Q6P1C1"/>
<dbReference type="PhosphoSitePlus" id="Q6P1C1"/>
<dbReference type="PaxDb" id="10090-ENSMUSP00000021817"/>
<dbReference type="ProteomicsDB" id="269499"/>
<dbReference type="Antibodypedia" id="13762">
    <property type="antibodies" value="111 antibodies from 25 providers"/>
</dbReference>
<dbReference type="DNASU" id="75678"/>
<dbReference type="Ensembl" id="ENSMUST00000220447.2">
    <property type="protein sequence ID" value="ENSMUSP00000152331.2"/>
    <property type="gene ID" value="ENSMUSG00000021385.11"/>
</dbReference>
<dbReference type="GeneID" id="75678"/>
<dbReference type="KEGG" id="mmu:75678"/>
<dbReference type="UCSC" id="uc007qjj.2">
    <property type="organism name" value="mouse"/>
</dbReference>
<dbReference type="AGR" id="MGI:1922928"/>
<dbReference type="CTD" id="64768"/>
<dbReference type="MGI" id="MGI:1922928">
    <property type="gene designation" value="Ippk"/>
</dbReference>
<dbReference type="VEuPathDB" id="HostDB:ENSMUSG00000021385"/>
<dbReference type="eggNOG" id="KOG4749">
    <property type="taxonomic scope" value="Eukaryota"/>
</dbReference>
<dbReference type="GeneTree" id="ENSGT00390000010053"/>
<dbReference type="HOGENOM" id="CLU_033188_1_0_1"/>
<dbReference type="InParanoid" id="Q6P1C1"/>
<dbReference type="OMA" id="HRQHCIV"/>
<dbReference type="OrthoDB" id="272370at2759"/>
<dbReference type="PhylomeDB" id="Q6P1C1"/>
<dbReference type="TreeFam" id="TF106142"/>
<dbReference type="BRENDA" id="2.7.1.158">
    <property type="organism ID" value="3474"/>
</dbReference>
<dbReference type="Reactome" id="R-MMU-1855167">
    <property type="pathway name" value="Synthesis of pyrophosphates in the cytosol"/>
</dbReference>
<dbReference type="Reactome" id="R-MMU-1855191">
    <property type="pathway name" value="Synthesis of IPs in the nucleus"/>
</dbReference>
<dbReference type="BioGRID-ORCS" id="75678">
    <property type="hits" value="14 hits in 78 CRISPR screens"/>
</dbReference>
<dbReference type="ChiTaRS" id="Ippk">
    <property type="organism name" value="mouse"/>
</dbReference>
<dbReference type="PRO" id="PR:Q6P1C1"/>
<dbReference type="Proteomes" id="UP000000589">
    <property type="component" value="Chromosome 13"/>
</dbReference>
<dbReference type="RNAct" id="Q6P1C1">
    <property type="molecule type" value="protein"/>
</dbReference>
<dbReference type="Bgee" id="ENSMUSG00000021385">
    <property type="expression patterns" value="Expressed in primary oocyte and 244 other cell types or tissues"/>
</dbReference>
<dbReference type="ExpressionAtlas" id="Q6P1C1">
    <property type="expression patterns" value="baseline and differential"/>
</dbReference>
<dbReference type="GO" id="GO:0005737">
    <property type="term" value="C:cytoplasm"/>
    <property type="evidence" value="ECO:0007669"/>
    <property type="project" value="UniProtKB-SubCell"/>
</dbReference>
<dbReference type="GO" id="GO:0005730">
    <property type="term" value="C:nucleolus"/>
    <property type="evidence" value="ECO:0007669"/>
    <property type="project" value="Ensembl"/>
</dbReference>
<dbReference type="GO" id="GO:0005524">
    <property type="term" value="F:ATP binding"/>
    <property type="evidence" value="ECO:0007669"/>
    <property type="project" value="UniProtKB-KW"/>
</dbReference>
<dbReference type="GO" id="GO:0035299">
    <property type="term" value="F:inositol-1,3,4,5,6-pentakisphosphate 2-kinase activity"/>
    <property type="evidence" value="ECO:0000250"/>
    <property type="project" value="HGNC-UCL"/>
</dbReference>
<dbReference type="GO" id="GO:0060090">
    <property type="term" value="F:molecular adaptor activity"/>
    <property type="evidence" value="ECO:0007669"/>
    <property type="project" value="Ensembl"/>
</dbReference>
<dbReference type="GO" id="GO:1901838">
    <property type="term" value="P:positive regulation of transcription of nucleolar large rRNA by RNA polymerase I"/>
    <property type="evidence" value="ECO:0007669"/>
    <property type="project" value="Ensembl"/>
</dbReference>
<dbReference type="FunFam" id="3.30.200.110:FF:000001">
    <property type="entry name" value="Inositol-pentakisphosphate 2-kinase"/>
    <property type="match status" value="1"/>
</dbReference>
<dbReference type="Gene3D" id="3.30.200.110">
    <property type="entry name" value="Inositol-pentakisphosphate 2-kinase, N-lobe"/>
    <property type="match status" value="1"/>
</dbReference>
<dbReference type="InterPro" id="IPR009286">
    <property type="entry name" value="Ins_P5_2-kin"/>
</dbReference>
<dbReference type="InterPro" id="IPR043001">
    <property type="entry name" value="IP5_2-K_N_lobe"/>
</dbReference>
<dbReference type="PANTHER" id="PTHR14456">
    <property type="entry name" value="INOSITOL POLYPHOSPHATE KINASE 1"/>
    <property type="match status" value="1"/>
</dbReference>
<dbReference type="PANTHER" id="PTHR14456:SF2">
    <property type="entry name" value="INOSITOL-PENTAKISPHOSPHATE 2-KINASE"/>
    <property type="match status" value="1"/>
</dbReference>
<dbReference type="Pfam" id="PF06090">
    <property type="entry name" value="Ins_P5_2-kin"/>
    <property type="match status" value="1"/>
</dbReference>
<name>IPPK_MOUSE</name>
<proteinExistence type="evidence at protein level"/>
<sequence length="489" mass="55928">MEEGKMDENEWSYHGEGNKSLVVAHAQRCVVLRFLKFPPNKKKTSEEILQHLQNIVDFGKNVMKDFLGENYVHCGEVVQLPLEFVKQLCLKIQCERPESRCDKDLDTFSGYAMCLPNLTRLQTFHFAEHRPILCVEIKPKCGFIPFSNDVTHEMKHKVCRYCMHQHLKVATGKWKKISKYCPLDLYSGNKQRMHFALRSLLQETQNNLRIFKNGELIYGCGDARSPVADLKELAHHLKPFFFPSNGLASGPHCTKAVIRELVHVITRVLLSSSEKARAGALRLGLQGPRVCEASPFSRSLHNQGKNTSEHSGLPKGCLLYKTLQVQMLDQLDIEGLYPLYKRVEQYLEEFPEERKTLQIDGPYDEVFYQKLLDLSTEDDGTVAFALTKVQQYRVAMTAKDCSIMIALSPCLQGTSSDQRPVIPSSRSRLAFSVSVLDLDLKPYESIPHQYKLDSKIVNYYSKTVHAKDDTVRSTRFKEHEDCTLVLHKV</sequence>
<protein>
    <recommendedName>
        <fullName>Inositol-pentakisphosphate 2-kinase</fullName>
        <ecNumber>2.7.1.158</ecNumber>
    </recommendedName>
    <alternativeName>
        <fullName>Inositol-1,3,4,5,6-pentakisphosphate 2-kinase</fullName>
    </alternativeName>
    <alternativeName>
        <fullName>Ins(1,3,4,5,6)P5 2-kinase</fullName>
        <shortName>InsP5 2-kinase</shortName>
    </alternativeName>
</protein>
<reference key="1">
    <citation type="journal article" date="2005" name="Science">
        <title>The transcriptional landscape of the mammalian genome.</title>
        <authorList>
            <person name="Carninci P."/>
            <person name="Kasukawa T."/>
            <person name="Katayama S."/>
            <person name="Gough J."/>
            <person name="Frith M.C."/>
            <person name="Maeda N."/>
            <person name="Oyama R."/>
            <person name="Ravasi T."/>
            <person name="Lenhard B."/>
            <person name="Wells C."/>
            <person name="Kodzius R."/>
            <person name="Shimokawa K."/>
            <person name="Bajic V.B."/>
            <person name="Brenner S.E."/>
            <person name="Batalov S."/>
            <person name="Forrest A.R."/>
            <person name="Zavolan M."/>
            <person name="Davis M.J."/>
            <person name="Wilming L.G."/>
            <person name="Aidinis V."/>
            <person name="Allen J.E."/>
            <person name="Ambesi-Impiombato A."/>
            <person name="Apweiler R."/>
            <person name="Aturaliya R.N."/>
            <person name="Bailey T.L."/>
            <person name="Bansal M."/>
            <person name="Baxter L."/>
            <person name="Beisel K.W."/>
            <person name="Bersano T."/>
            <person name="Bono H."/>
            <person name="Chalk A.M."/>
            <person name="Chiu K.P."/>
            <person name="Choudhary V."/>
            <person name="Christoffels A."/>
            <person name="Clutterbuck D.R."/>
            <person name="Crowe M.L."/>
            <person name="Dalla E."/>
            <person name="Dalrymple B.P."/>
            <person name="de Bono B."/>
            <person name="Della Gatta G."/>
            <person name="di Bernardo D."/>
            <person name="Down T."/>
            <person name="Engstrom P."/>
            <person name="Fagiolini M."/>
            <person name="Faulkner G."/>
            <person name="Fletcher C.F."/>
            <person name="Fukushima T."/>
            <person name="Furuno M."/>
            <person name="Futaki S."/>
            <person name="Gariboldi M."/>
            <person name="Georgii-Hemming P."/>
            <person name="Gingeras T.R."/>
            <person name="Gojobori T."/>
            <person name="Green R.E."/>
            <person name="Gustincich S."/>
            <person name="Harbers M."/>
            <person name="Hayashi Y."/>
            <person name="Hensch T.K."/>
            <person name="Hirokawa N."/>
            <person name="Hill D."/>
            <person name="Huminiecki L."/>
            <person name="Iacono M."/>
            <person name="Ikeo K."/>
            <person name="Iwama A."/>
            <person name="Ishikawa T."/>
            <person name="Jakt M."/>
            <person name="Kanapin A."/>
            <person name="Katoh M."/>
            <person name="Kawasawa Y."/>
            <person name="Kelso J."/>
            <person name="Kitamura H."/>
            <person name="Kitano H."/>
            <person name="Kollias G."/>
            <person name="Krishnan S.P."/>
            <person name="Kruger A."/>
            <person name="Kummerfeld S.K."/>
            <person name="Kurochkin I.V."/>
            <person name="Lareau L.F."/>
            <person name="Lazarevic D."/>
            <person name="Lipovich L."/>
            <person name="Liu J."/>
            <person name="Liuni S."/>
            <person name="McWilliam S."/>
            <person name="Madan Babu M."/>
            <person name="Madera M."/>
            <person name="Marchionni L."/>
            <person name="Matsuda H."/>
            <person name="Matsuzawa S."/>
            <person name="Miki H."/>
            <person name="Mignone F."/>
            <person name="Miyake S."/>
            <person name="Morris K."/>
            <person name="Mottagui-Tabar S."/>
            <person name="Mulder N."/>
            <person name="Nakano N."/>
            <person name="Nakauchi H."/>
            <person name="Ng P."/>
            <person name="Nilsson R."/>
            <person name="Nishiguchi S."/>
            <person name="Nishikawa S."/>
            <person name="Nori F."/>
            <person name="Ohara O."/>
            <person name="Okazaki Y."/>
            <person name="Orlando V."/>
            <person name="Pang K.C."/>
            <person name="Pavan W.J."/>
            <person name="Pavesi G."/>
            <person name="Pesole G."/>
            <person name="Petrovsky N."/>
            <person name="Piazza S."/>
            <person name="Reed J."/>
            <person name="Reid J.F."/>
            <person name="Ring B.Z."/>
            <person name="Ringwald M."/>
            <person name="Rost B."/>
            <person name="Ruan Y."/>
            <person name="Salzberg S.L."/>
            <person name="Sandelin A."/>
            <person name="Schneider C."/>
            <person name="Schoenbach C."/>
            <person name="Sekiguchi K."/>
            <person name="Semple C.A."/>
            <person name="Seno S."/>
            <person name="Sessa L."/>
            <person name="Sheng Y."/>
            <person name="Shibata Y."/>
            <person name="Shimada H."/>
            <person name="Shimada K."/>
            <person name="Silva D."/>
            <person name="Sinclair B."/>
            <person name="Sperling S."/>
            <person name="Stupka E."/>
            <person name="Sugiura K."/>
            <person name="Sultana R."/>
            <person name="Takenaka Y."/>
            <person name="Taki K."/>
            <person name="Tammoja K."/>
            <person name="Tan S.L."/>
            <person name="Tang S."/>
            <person name="Taylor M.S."/>
            <person name="Tegner J."/>
            <person name="Teichmann S.A."/>
            <person name="Ueda H.R."/>
            <person name="van Nimwegen E."/>
            <person name="Verardo R."/>
            <person name="Wei C.L."/>
            <person name="Yagi K."/>
            <person name="Yamanishi H."/>
            <person name="Zabarovsky E."/>
            <person name="Zhu S."/>
            <person name="Zimmer A."/>
            <person name="Hide W."/>
            <person name="Bult C."/>
            <person name="Grimmond S.M."/>
            <person name="Teasdale R.D."/>
            <person name="Liu E.T."/>
            <person name="Brusic V."/>
            <person name="Quackenbush J."/>
            <person name="Wahlestedt C."/>
            <person name="Mattick J.S."/>
            <person name="Hume D.A."/>
            <person name="Kai C."/>
            <person name="Sasaki D."/>
            <person name="Tomaru Y."/>
            <person name="Fukuda S."/>
            <person name="Kanamori-Katayama M."/>
            <person name="Suzuki M."/>
            <person name="Aoki J."/>
            <person name="Arakawa T."/>
            <person name="Iida J."/>
            <person name="Imamura K."/>
            <person name="Itoh M."/>
            <person name="Kato T."/>
            <person name="Kawaji H."/>
            <person name="Kawagashira N."/>
            <person name="Kawashima T."/>
            <person name="Kojima M."/>
            <person name="Kondo S."/>
            <person name="Konno H."/>
            <person name="Nakano K."/>
            <person name="Ninomiya N."/>
            <person name="Nishio T."/>
            <person name="Okada M."/>
            <person name="Plessy C."/>
            <person name="Shibata K."/>
            <person name="Shiraki T."/>
            <person name="Suzuki S."/>
            <person name="Tagami M."/>
            <person name="Waki K."/>
            <person name="Watahiki A."/>
            <person name="Okamura-Oho Y."/>
            <person name="Suzuki H."/>
            <person name="Kawai J."/>
            <person name="Hayashizaki Y."/>
        </authorList>
    </citation>
    <scope>NUCLEOTIDE SEQUENCE [LARGE SCALE MRNA]</scope>
    <source>
        <strain>C57BL/6J</strain>
        <tissue>Placenta</tissue>
        <tissue>Skin</tissue>
    </source>
</reference>
<reference key="2">
    <citation type="journal article" date="2004" name="Genome Res.">
        <title>The status, quality, and expansion of the NIH full-length cDNA project: the Mammalian Gene Collection (MGC).</title>
        <authorList>
            <consortium name="The MGC Project Team"/>
        </authorList>
    </citation>
    <scope>NUCLEOTIDE SEQUENCE [LARGE SCALE MRNA]</scope>
    <source>
        <strain>C57BL/6J</strain>
        <tissue>Brain</tissue>
        <tissue>Limb</tissue>
    </source>
</reference>
<reference key="3">
    <citation type="journal article" date="2005" name="Proc. Natl. Acad. Sci. U.S.A.">
        <title>Disruption of the mouse inositol 1,3,4,5,6-pentakisphosphate 2-kinase gene, associated lethality, and tissue distribution of 2-kinase expression.</title>
        <authorList>
            <person name="Verbsky J."/>
            <person name="Lavine K."/>
            <person name="Majerus P.W."/>
        </authorList>
    </citation>
    <scope>FUNCTION</scope>
    <scope>TISSUE SPECIFICITY</scope>
    <scope>DISRUPTION PHENOTYPE</scope>
</reference>
<feature type="chain" id="PRO_0000110530" description="Inositol-pentakisphosphate 2-kinase">
    <location>
        <begin position="1"/>
        <end position="489"/>
    </location>
</feature>
<feature type="short sequence motif" description="EXKPK motif">
    <location>
        <begin position="136"/>
        <end position="140"/>
    </location>
</feature>
<feature type="sequence conflict" description="In Ref. 1; BAE20447." evidence="3" ref="1">
    <original>E</original>
    <variation>Q</variation>
    <location>
        <position position="83"/>
    </location>
</feature>
<feature type="helix" evidence="4">
    <location>
        <begin position="8"/>
        <end position="10"/>
    </location>
</feature>
<feature type="strand" evidence="4">
    <location>
        <begin position="11"/>
        <end position="16"/>
    </location>
</feature>
<feature type="strand" evidence="4">
    <location>
        <begin position="18"/>
        <end position="37"/>
    </location>
</feature>
<feature type="helix" evidence="4">
    <location>
        <begin position="45"/>
        <end position="61"/>
    </location>
</feature>
<feature type="helix" evidence="4">
    <location>
        <begin position="63"/>
        <end position="67"/>
    </location>
</feature>
<feature type="turn" evidence="4">
    <location>
        <begin position="69"/>
        <end position="71"/>
    </location>
</feature>
<feature type="strand" evidence="4">
    <location>
        <begin position="77"/>
        <end position="79"/>
    </location>
</feature>
<feature type="helix" evidence="4">
    <location>
        <begin position="82"/>
        <end position="92"/>
    </location>
</feature>
<feature type="turn" evidence="4">
    <location>
        <begin position="93"/>
        <end position="95"/>
    </location>
</feature>
<feature type="helix" evidence="4">
    <location>
        <begin position="98"/>
        <end position="102"/>
    </location>
</feature>
<feature type="strand" evidence="4">
    <location>
        <begin position="103"/>
        <end position="105"/>
    </location>
</feature>
<feature type="strand" evidence="4">
    <location>
        <begin position="111"/>
        <end position="116"/>
    </location>
</feature>
<feature type="turn" evidence="4">
    <location>
        <begin position="118"/>
        <end position="120"/>
    </location>
</feature>
<feature type="turn" evidence="5">
    <location>
        <begin position="123"/>
        <end position="125"/>
    </location>
</feature>
<feature type="strand" evidence="4">
    <location>
        <begin position="133"/>
        <end position="137"/>
    </location>
</feature>
<feature type="helix" evidence="4">
    <location>
        <begin position="153"/>
        <end position="156"/>
    </location>
</feature>
<feature type="helix" evidence="4">
    <location>
        <begin position="160"/>
        <end position="170"/>
    </location>
</feature>
<feature type="strand" evidence="4">
    <location>
        <begin position="173"/>
        <end position="176"/>
    </location>
</feature>
<feature type="helix" evidence="4">
    <location>
        <begin position="182"/>
        <end position="185"/>
    </location>
</feature>
<feature type="strand" evidence="4">
    <location>
        <begin position="186"/>
        <end position="188"/>
    </location>
</feature>
<feature type="helix" evidence="4">
    <location>
        <begin position="190"/>
        <end position="202"/>
    </location>
</feature>
<feature type="turn" evidence="4">
    <location>
        <begin position="205"/>
        <end position="207"/>
    </location>
</feature>
<feature type="strand" evidence="4">
    <location>
        <begin position="208"/>
        <end position="214"/>
    </location>
</feature>
<feature type="helix" evidence="4">
    <location>
        <begin position="230"/>
        <end position="241"/>
    </location>
</feature>
<feature type="helix" evidence="4">
    <location>
        <begin position="254"/>
        <end position="269"/>
    </location>
</feature>
<feature type="strand" evidence="4">
    <location>
        <begin position="275"/>
        <end position="277"/>
    </location>
</feature>
<feature type="strand" evidence="5">
    <location>
        <begin position="289"/>
        <end position="291"/>
    </location>
</feature>
<feature type="strand" evidence="5">
    <location>
        <begin position="315"/>
        <end position="317"/>
    </location>
</feature>
<feature type="helix" evidence="4">
    <location>
        <begin position="318"/>
        <end position="326"/>
    </location>
</feature>
<feature type="helix" evidence="4">
    <location>
        <begin position="333"/>
        <end position="349"/>
    </location>
</feature>
<feature type="helix" evidence="4">
    <location>
        <begin position="353"/>
        <end position="356"/>
    </location>
</feature>
<feature type="turn" evidence="4">
    <location>
        <begin position="357"/>
        <end position="360"/>
    </location>
</feature>
<feature type="helix" evidence="4">
    <location>
        <begin position="365"/>
        <end position="370"/>
    </location>
</feature>
<feature type="helix" evidence="4">
    <location>
        <begin position="382"/>
        <end position="399"/>
    </location>
</feature>
<feature type="strand" evidence="4">
    <location>
        <begin position="402"/>
        <end position="409"/>
    </location>
</feature>
<feature type="strand" evidence="4">
    <location>
        <begin position="425"/>
        <end position="427"/>
    </location>
</feature>
<feature type="strand" evidence="4">
    <location>
        <begin position="429"/>
        <end position="436"/>
    </location>
</feature>
<feature type="helix" evidence="4">
    <location>
        <begin position="443"/>
        <end position="445"/>
    </location>
</feature>
<feature type="helix" evidence="4">
    <location>
        <begin position="446"/>
        <end position="463"/>
    </location>
</feature>
<comment type="function">
    <text evidence="2">Phosphorylates Ins(1,3,4,5,6)P5 at position 2 to form Ins(1,2,3,4,5,6)P6 (InsP6 or phytate). InsP6 is involved in many processes such as mRNA export, non-homologous end-joining, endocytosis, ion channel regulation. It also protects cells from TNF-alpha-induced apoptosis.</text>
</comment>
<comment type="catalytic activity">
    <reaction>
        <text>1D-myo-inositol 1,3,4,5,6-pentakisphosphate + ATP = 1D-myo-inositol hexakisphosphate + ADP + H(+)</text>
        <dbReference type="Rhea" id="RHEA:20313"/>
        <dbReference type="ChEBI" id="CHEBI:15378"/>
        <dbReference type="ChEBI" id="CHEBI:30616"/>
        <dbReference type="ChEBI" id="CHEBI:57733"/>
        <dbReference type="ChEBI" id="CHEBI:58130"/>
        <dbReference type="ChEBI" id="CHEBI:456216"/>
        <dbReference type="EC" id="2.7.1.158"/>
    </reaction>
</comment>
<comment type="subcellular location">
    <subcellularLocation>
        <location evidence="1">Cytoplasm</location>
    </subcellularLocation>
    <subcellularLocation>
        <location evidence="1">Nucleus</location>
    </subcellularLocation>
</comment>
<comment type="tissue specificity">
    <text evidence="2">In brain, it is expressed throughout the hippocampus (CA1, CA2, CA3 and dentate gyrus), inner layers of the cerebral cortex, and Purkinje cells of the cerebellum. In heart, it is expressed in cardiomyocytes but not in interstitial cells, blood vessels, or valves. Also expressed in testis.</text>
</comment>
<comment type="developmental stage">
    <text>In 9 dpc embryos it is expressed in regions corresponding to the neural tube, notochord and somites. Through the neural tube, it is expressed in the ventricular zone and in migrating neuroblasts. Also expressed in the notochord and specific regions of the somite. Strongly expressed in the myotome (future skeletal muscle) of the somite. In addition to the neural tube, it is also expressed in the ventricular zone and migrating neuroblasts throughout the embryonic brain. Prominent expression is detected in the yolk sac and embryonic heart. Within the yolk sac, it is expressed in both the epithelial and endothelial layers (blood vessels) but absent from the blood islands. In the heart, it is detected in both the atrial and ventricular chambers. In the ventricular myocardium it is present in both the endocardium and myocardium. Also expressed in the cardinal vein, aorta, digestive tract, and pharyngeal arches.</text>
</comment>
<comment type="domain">
    <text>The EXKPK motif is conserved in inositol-pentakisphosphate 2-kinases of both family 1 and 2.</text>
</comment>
<comment type="disruption phenotype">
    <text evidence="2">Death during ermbryogenesis before 8.5 dpc, suggesting that InsP6 is required for yolk sac function and development.</text>
</comment>
<comment type="similarity">
    <text evidence="3">Belongs to the IPK1 type 2 family.</text>
</comment>
<accession>Q6P1C1</accession>
<accession>Q3V3Z0</accession>